<proteinExistence type="evidence at protein level"/>
<organism evidence="14">
    <name type="scientific">Mus musculus</name>
    <name type="common">Mouse</name>
    <dbReference type="NCBI Taxonomy" id="10090"/>
    <lineage>
        <taxon>Eukaryota</taxon>
        <taxon>Metazoa</taxon>
        <taxon>Chordata</taxon>
        <taxon>Craniata</taxon>
        <taxon>Vertebrata</taxon>
        <taxon>Euteleostomi</taxon>
        <taxon>Mammalia</taxon>
        <taxon>Eutheria</taxon>
        <taxon>Euarchontoglires</taxon>
        <taxon>Glires</taxon>
        <taxon>Rodentia</taxon>
        <taxon>Myomorpha</taxon>
        <taxon>Muroidea</taxon>
        <taxon>Muridae</taxon>
        <taxon>Murinae</taxon>
        <taxon>Mus</taxon>
        <taxon>Mus</taxon>
    </lineage>
</organism>
<sequence>MNGQAPPHDVVVANGTEKFIVPKIKKNQLGASTPSRPQAEAALPTTARSIAGVYVEASGQTQSIYAAIKQGLLPTGLGLTLLEAQAATGGLVDLAQGQLLPVSEALRRGLVGLELKEKLLAAERAVTGYPDPYGGEKLSLFQAIKKEVVDRTLGWRLLEAQLATGGLVDPTQGVQVAPELACQQGLLDKETWLSLVESEPSMGTPGFSDPNTLEQLPYSVLLGRCVQDPSSGLPLLPLKTTFHTLAGAASASMLLEAGVLNEEMVRDLQEGMLVVSDVGTRPEVRRYLEGTGGLAGVVLLPGGHKKSFFQATVEHLVSKGIALQLLEAQAATRTLVHPTTGQRLWVEEAVKAGLVGPELHEQLLVAEQAVTGYYDPFSSSRIPVFQAMKKGLVDQPLALRLLDAQLATGGLICPARRFRLPLEAALRFGCLDEETRQRLSQAMGFSDPTTHDRLGYEQLLALSVTDPETGLAFLPLPGMSHANEPQGPTFIDHCTRQALSKATTSISVGRYQGRPVSLWELLFSESVPVKKRAMLAQRHQEGALSVEELAAELKNIVEQAAATAKVTFAGLRDTVTPGELLKAEIINQDLFEQLERGQTSAQDVGSLDSVQRYLQGTGSIAGLLLPDSQERLSIYEARSKGLLRPGTALILLEAQAATGFIIDPKENKRYSVEEALRAGVIGPDVYAKLLSAEHAVTGYTDPYSGEQISLFQAMQRDLIVRDHGIRLLEAQIATGGVIDPVHSHRVPVDVAYQRGYFDQILNSILLDPSDDTKGFFDPNTHENLTYLQLLERCVHDSETGLHLLPLSSTRPQLVDSSTRQAFQKLLLSVKYGRFRGQRVSAWELVNSEYFTEDRRRQLLQRYRQRKITLEQVTQLLEKEMRRWTDITLPALQGQVTAYQLLEAHIINQELLDQVLTGTISPDALLQVGDVHRYLRGSGTVGGVLLKPSNQRISLYQAMKQKLLPPSTALALLEAQAATGTITDPCSMETLSVDEAVCRGVVGAEVYGKLKRAEHSITGYRDPFSGKKVSLFRAMKKGLVPVEQATRLLEAQVSTGGVVDPTTHLHLPMPVAVQRGCIDREMEAALSRSPETFPTPDGRGHTSYAQLLEHCLQDKASGLHLLPLTEDAPNVPTDTQIQETLQASAGTEDGLSLWDLLTSCHFTEEQRRGYLEDVKVGKISVPQLQNTVRSWVHSAKLLARARITVPGPRGEVPATWLRDAGIITQETLEALAQGMQSPDEVAKQPTVKVCLWGTGCVAGVLLQPSGTKLSIAQAVRDGLLPTGLGQQLLEAQVASGFLVNPLTNQRLSVEGAVKAGLVGMEQSEHLRQVEKAVTGYSDPFSGGSLSLWQAMEKGLVTQSEAFPLLQVQLATGGVVDPVHGVHLPQEVAYKLGLLDEQTSRVLTATGKENKLFFDPNSREKVTYQQLRELCVLDADTGLWLLPLPQGTVLEVDDHTAVALRAMKVPINMGRFQGHSVSLWDLLHSEYVGAEKRRELVALCCSGRAAALRQVIGMLTTLVEAAEKQPSQATFKGLRKQVSAGDLFRSQLITKQTLDELNQGKRTVQEVTEMDSVRRSLEGGNFIAGVLIQDTKEKMSIPEALRRHILRPGTALVLLEAQAATGFIIDPVENRKLTVEQAFQAGMFGKETYMKLLSAERAVTGYTDPYTGEQISLFQAMQRDLIVRDHGIRLLEAQIATGGIIDPVHSHRVPVDVAYQRGYFNEEMNRILSDPSDDTKGFFDPNTHENLTYLQLLERCVEDPETGLYMLEIVKKGETYTYIDEATRQALTSRTVKMYVGKFAGQTVSVWDLLSSQYFTEGRRRKLLREYRAQNIGLENLLEVITSTVEETEKQSQIFKVPGIHGDVTAAELFNSGILNKKTLDALRSGDRGFQDLRWLEDVRVYLEGSNYIAGVIAPLTQKVMSFYEASREELIPAGFAAQMLEAQAATGYLMDPCTNQRLCVDEAIAAGLVGEDLRERLVNAEMAAKGYKDPATGETIPLYQAMERKLVGREEALRLLEVQVATGGVIDPRHHHRVPLDTACQRGCMCDDSLVLIADQKHMRKRFVDPNTQEKVTYQELQDRCQREEKSGWALFPVVKDKKDIEYVDEATKRALEAEQVEVTVGRYRGQRRSVWELLNSEYVSEEKKMELVRLYKEDTTRALQKVVELILQMIADKERRSRQLWFRGLRTQVTAEELLRSEVITKQTLEDLEEGRTTVDQIERKEDVKRYLKGTSCIAGVLVPVQGEPGRQEKMSIYQAMWKGVLRPGTALVLLEAQAATGFIIDPVNNRRLSVEEAVAAGVVGGEIQEKLLSAERAVTGYTDPYTGDQISLFQAMQRDLIVRDHGIRLLEAQIATGGVIDPVHSHRVPVDVAYQRGYFDEDMNSILADPGDDTKGFFDPNTHENLTYLQLLRRCVRDPETGFYMLQLAGKGSSVHHLSEELRRALREARVTPGTGDFQGQSISVWELLFYREVPESLRQDLLRCYQAGGLTVHDVTTTLTSLLARAKDGSPRGDPQGALGKATMEVKRGHLRGHEVPVWDILTSNYVSRDTRKELLAQFSSGSLTLPMLKRRLTTIIEEAEETQESKPKPRDASLKQQDTGARGSGTSPDEGDAQDSSESARQQQEQTLRATTMQVHRGQFRDQQVSVWKVLFSSYLSETRREELLAQHLAGKLGVMELVSLLTQIIEETEERLSKVSFPGLRRQVSASELCTSGILDRDTMRELAQGTKTIHEVTEMDSVKRYLGGSSCIAGVLVPVQGEPGRQEKMSIYQAMWKGVLRPGTALVLLEAQAATGFIIDPVNNRRLSVEEAVAAGVVGGEIQEKLLSAERAVTGYTDPYTGDQISLFQAMQRDLIVRDHGIRLLEAQIATGGVIDPVHSHRVPVDVAYQRGYFDEDMNSILADPGDDTKGFFDPNTHENLTYLQLLRRCVRDPETGFYMLQLAGKGSSVHHLSEELRRALREARVTPGTGDFQGQSISVWELLFYREVPESLRQDLLRRYQAGGLTVHDVTTTLTSLLARAKDGSPRXDPQGALGKATMEVKRGHLRGHXVPVWDILTSNYVSRDTRKELLAQFSSGSLTLPMLKRRLTTIIEEAEETQESKPKPRDASLKQQDTGARGSGTSPDEGDAQDSSESARQQQEQTLRATTMQVHRGQFRDQQVSVWKVLFSSYLSETRREELLAQHLAGKLGVMELVSLLTQIIEETEERLSKVSFPGLRRQVSASELCTSGILDRDTMRELAQGTKTIHEVTEMDSVKRYLGGSSCIAGVLVPVQGEPGRQEKMSIYQAMWKGVLRPGTALVLLEAQAATGFIIDPVNNRRLSVEEAVAAGVVGGEIQEKLLSAERAVTGYTDPYTGDQISLFQAMQRDLIVRDHGIRLLEAQIATGGVIDPVHSHRVPVDVAYQRGYFDEDMNSILADPGDDTKGFFDPNTHENLTYLQLLRRCVRDPETGFYMLQLAGKGSSVHHLSEELRRALREARVTPGTGDFQGQSISVWELLFYREVPESLRQDLLRRYQAGGLTVHDVTTTLTSLLARAKDGSPRXDPQGALGKATMEVKRGHLRGHXVPVWDILTSNYVSRDTRKELLAQFSSGSLTLPMLKRRLTTIIEEAEETQESKPKPRDASLKQQDTGARGSGTSPDEGDAQDSSESARQQQEQTLRATTMQVHRGQFRDQQVSVWKVLFSSYLSETRREELLAQHLAGKLGVMELVSLLTQIIEETEERLSKVSFPGLRRQVSASELCTSGILDRDTMRELAQGTKTIHEVTEMDSVKRYLGGSSCIAGVLVPVQGEPGRQEKMSIYQAMWKGVLRPGTALVLLEAQAATGFIIDPVNNRRLSVEEAVAAGVVGGEIQEKLLSAERAVTGYTDPYTGDQISLFQAMQRDLIVRDHGIRLLEAQIATGGVIDPVHSHRVPVDVAYQRGYFDEDMNSILADPGDDTKGFFDPNTHENLTYLQLLRRCVRDPETGFYMLQLAGKGSSVHHLSEELRRALREARVTPGTGDFQGQSISVWELLFYREVPESLRQDLLRRYQAGGLTVHDVTTTLTSLLARAKDGSPRXDPQGALGKATMEVKRGHLRGHXVPVWDILTSNYVSRDTRKELLAQFSSGSLTLPMLKRRLTTIIEEAEETQESKPKPRDASLKQQDTGARGSGTSPDEGDAQDSSESARQQQEQTLRATTMQVHRGQFRDQQVSVWKVLFSSYLSETRREELLAQHLAGKLGVMELVSLLTQIIEETEERLSKVSFPGLRRQVSASELCTSGILDRDTMRELAQGTKTIHEVTEMDSVKRYLGGSSCIAGVLVPVQGEPGRQEKMSIYQAMWKGVLRPGTALVLLEAQAATGFIIDPVNNRRLSVEEAVAAGVVGGEIQEKLLSAERAVTGYTDPYTGDQISLFQAMQRDLIVRDHGIRLLEAQIATGGVIDPVHSHRVPVDVAYQRGYFDEDMNSILADPGDDTKGFFDPNTHENLTYLQLLRRCVRDPETGFYMLQLAGKGSSVHHLSEELRRALREARVTPGTGDFQGQSISVWELLFYREVPESLRQDLLRRYQAGGLTVHDVTTTLTSLLARAKDGSPRXDPQGALGKATMEVKRGHLRGHXVPVWDILTSNYVSRDTRKELLAQFSSGSLTLPMLKRRLTTIIEEAEETQESKPKPRDASLKQQDTGARGSGTSPDEGDAQDSSESARQQQEQTLRATTMQVHRGQFRDQQVSVWKVLFSSYLSETRREELLAQHLAGKLGVMELVSLLTQIIEETEERLSKVSFPGLRRQVSASELCTSGILDRDTMRELAQGTKTIHEVTEMDSVKRYLGGSSCIAGVLVPVQGEPGRQEKMSIYQAMWKGVLRPGTALVLLEAQAATGFIIDPVNNRRLSVEEAVAAGVVGGEIQEKLLSAERAVTGYTDPYTGDQISLFQAMQRDLIVRDHGIRLLEAQIATGGVIDPVHSHRVPVDVAYQRGYFDEDMNSILADPGDDTKGFFDPNTHENLTYLQLLRRCVRDPETGFYMLQLAGKGSSVHHLSEELRRALREARVTPGTGDFQGQSISVWELLFYREVPESLRQDLLRRYQAGGLTVHDVTTTLTSLLARAKDGSPRXDPQGALGKATMEVKRGHLRGHXVPVWDILTSNYVSRDTRKELLAQFSSGSLTLPMLKRRLTTIIEEAEETQESKPKPRDASLKQQDTGARGSGTSPDEGDAQDSSESARQQQEQTLRATTMQVHRGQFRDQQVSVWKVLFSSYLSETRREELLAQHLAGKLGVMELVSLLTQIIEETEERLSKVSFPGLRRQVSASELCTSGILDRDTMRELAQGTKTIHEVTEMDSVKRYLGGSSCIAGVLVPVQGEPGRQEKMSIYQAMWKGVLRPGTALVLLEAQAATGFIIDPVNNRRLSVEEAVAAGVVGGEIQEKLLSAERAVTGYTDPYTGDQISLFQAMQRDLIVRDHGIRLLEAQIATGGVIDPVHSHRVPVDVAYQRGYFDEDMNSILADPGDDTKGFFDPNTHENLTYLQLLRRCVRDPETGFYMLQLAGKGSSVHHLSEELRRALREARVTPGTGDFQGQSISVWELLFYREVPESLRQDLLRRYQAGGLTVHDVTTTLTSLLARAKDGSPRXDPQGALGKATMEVKRGHLRGHXVPVWDILTSNYVSRDTRKELLAQFSSGSLTLPMLKRRLTTIIEEAEETQESKPKPRDASLKQQDTGARGSGTSPDEGDAQDSSESARQQQEQTLRATTMQVHRGQFRDQQVSVWKVLFSSYLSETRREELLAQHLAGKLGVMELVSLLTQIIEETEERLSKVSFPGLRRQVSASELCTSGILDRDTMRELAQGTKTIHEVTEMDSVKRYLGGSSCIAGVLVPVQGEPGRQEKMSIYQAMWKGVLRPGTALVLLEAQAATGFIIDPVNNRRLSVEEAVAAGVVGGEIQEKLLSAERAVTGYTDPYTGDQISLFQAMQRDLIVRDHGIRLLEAQIATGGVIDPVHSHRVPVDVAYQRGYFDEDMNSILADPGDDTKGFFDPNTHENLTYLQLLRRCVRDPETGFYMLQLAGKGSSVHHLSEELRRALREARVTPGTGDFQGQSISVWELLFYREVPESLRQDLLRRYQAGGLTVHDVTTTLTSLLARAKDGSPREDPQGALGKATMEVKRGHLRGHVVPVWDILTSNYVSRDTRKELLAQFSSGSLTLPMLKRRLTTIIEEAEETQESKPKPRDASLKQQDTGARGSGTSPDEGDAQDSSESARQQQEQTLRATTMQVHRGQFRDQQVSVWKVLFSSYLSETRREELLAQHLAGKLGVMELVSLLTQIIEETEERLSKVSFPGLRRQVSASELCTSGILDRDTMRELAQGTKTIHEVTEMDSVKRYLGGSSCIAGVLVPVQGEPGRQEKMSIYQAMWKGVLRPGTALVLLEAQAATGFIIDPVNNRRLSVEEAVAAGVVGGEIQEKLLSAERAVTGYTDPYTGDQISLFQAMQRDLIVKNHGIRLLEAQIATGGVIDPVHSHRVPVDVAYQRGYFDQEMNSILADPGDDTKGFFDPNTHENLTYLQLLQRATIDPETGLLFLSLSKG</sequence>
<protein>
    <recommendedName>
        <fullName evidence="11">Epiplakin</fullName>
    </recommendedName>
</protein>
<reference evidence="12" key="1">
    <citation type="journal article" date="2003" name="J. Biol. Chem.">
        <title>Epiplakin gene analysis in mouse reveals a single exon encoding a 725-kDa protein with expression restricted to epithelial tissues.</title>
        <authorList>
            <person name="Spazierer D."/>
            <person name="Fuchs P."/>
            <person name="Proell V."/>
            <person name="Janda L."/>
            <person name="Oehler S."/>
            <person name="Fischer I."/>
            <person name="Hauptmann R."/>
            <person name="Wiche G."/>
        </authorList>
    </citation>
    <scope>NUCLEOTIDE SEQUENCE [MRNA]</scope>
    <scope>TISSUE SPECIFICITY</scope>
    <source>
        <strain evidence="14">C57BL/6J</strain>
        <tissue evidence="4">Skin</tissue>
    </source>
</reference>
<reference evidence="12" key="2">
    <citation type="journal article" date="2004" name="Genome Res.">
        <title>The status, quality, and expansion of the NIH full-length cDNA project: the Mammalian Gene Collection (MGC).</title>
        <authorList>
            <consortium name="The MGC Project Team"/>
        </authorList>
    </citation>
    <scope>NUCLEOTIDE SEQUENCE [LARGE SCALE MRNA] OF 6318-6548</scope>
    <source>
        <tissue evidence="13">Salivary gland</tissue>
    </source>
</reference>
<reference key="3">
    <citation type="journal article" date="2006" name="Mol. Cell. Biol.">
        <title>Elimination of epiplakin by gene targeting results in acceleration of keratinocyte migration in mice.</title>
        <authorList>
            <person name="Goto M."/>
            <person name="Sumiyoshi H."/>
            <person name="Sakai T."/>
            <person name="Faessler R."/>
            <person name="Ohashi S."/>
            <person name="Adachi E."/>
            <person name="Yoshioka H."/>
            <person name="Fujiwara S."/>
        </authorList>
    </citation>
    <scope>DISRUPTION PHENOTYPE</scope>
    <scope>TISSUE SPECIFICITY</scope>
    <scope>FUNCTION</scope>
</reference>
<reference key="4">
    <citation type="journal article" date="2008" name="J. Cell Sci.">
        <title>Stress-induced recruitment of epiplakin to keratin networks increases their resistance to hyperphosphorylation-induced disruption.</title>
        <authorList>
            <person name="Spazierer D."/>
            <person name="Raberger J."/>
            <person name="Gross K."/>
            <person name="Fuchs P."/>
            <person name="Wiche G."/>
        </authorList>
    </citation>
    <scope>INTERACTION WITH KRT5 AND KRT14</scope>
    <scope>TISSUE SPECIFICITY</scope>
    <scope>FUNCTION</scope>
</reference>
<reference key="5">
    <citation type="journal article" date="2010" name="J. Dermatol. Sci.">
        <title>Epiplakin accelerates the lateral organization of keratin filaments during wound healing.</title>
        <authorList>
            <person name="Ishikawa K."/>
            <person name="Sumiyoshi H."/>
            <person name="Matsuo N."/>
            <person name="Takeo N."/>
            <person name="Goto M."/>
            <person name="Okamoto O."/>
            <person name="Tatsukawa S."/>
            <person name="Kitamura H."/>
            <person name="Fujikura Y."/>
            <person name="Yoshioka H."/>
            <person name="Fujiwara S."/>
        </authorList>
    </citation>
    <scope>SUBCELLULAR LOCATION</scope>
    <scope>FUNCTION</scope>
</reference>
<reference key="6">
    <citation type="journal article" date="2013" name="Invest. Ophthalmol. Vis. Sci.">
        <title>Increased fragility, impaired differentiation, and acceleration of migration of corneal epithelium of epiplakin-null mice.</title>
        <authorList>
            <person name="Kokado M."/>
            <person name="Okada Y."/>
            <person name="Goto M."/>
            <person name="Ishikawa K."/>
            <person name="Miyamoto T."/>
            <person name="Yamanaka O."/>
            <person name="Fujiwara S."/>
            <person name="Saika S."/>
        </authorList>
    </citation>
    <scope>SUBCELLULAR LOCATION</scope>
    <scope>FUNCTION</scope>
</reference>
<reference key="7">
    <citation type="journal article" date="2014" name="PLoS ONE">
        <title>Epiplakin deficiency aggravates murine caerulein-induced acute pancreatitis and favors the formation of acinar keratin granules.</title>
        <authorList>
            <person name="Woegenstein K.L."/>
            <person name="Szabo S."/>
            <person name="Lunova M."/>
            <person name="Wiche G."/>
            <person name="Haybaeck J."/>
            <person name="Strnad P."/>
            <person name="Boor P."/>
            <person name="Wagner M."/>
            <person name="Fuchs P."/>
        </authorList>
    </citation>
    <scope>SUBCELLULAR LOCATION</scope>
    <scope>TISSUE SPECIFICITY</scope>
    <scope>FUNCTION</scope>
</reference>
<reference key="8">
    <citation type="journal article" date="2015" name="J. Hepatol.">
        <title>Epiplakin attenuates experimental mouse liver injury by chaperoning keratin reorganization.</title>
        <authorList>
            <person name="Szabo S."/>
            <person name="Woegenstein K.L."/>
            <person name="Oesterreicher C.H."/>
            <person name="Guldiken N."/>
            <person name="Chen Y."/>
            <person name="Doler C."/>
            <person name="Wiche G."/>
            <person name="Boor P."/>
            <person name="Haybaeck J."/>
            <person name="Strnad P."/>
            <person name="Fuchs P."/>
        </authorList>
    </citation>
    <scope>TISSUE SPECIFICITY</scope>
    <scope>INDUCTION</scope>
    <scope>INTERACTION WITH KRT8 AND KRT18</scope>
    <scope>FUNCTION</scope>
    <scope>SUBCELLULAR LOCATION</scope>
</reference>
<comment type="function">
    <text evidence="5 6 7 8 9 10">Cytoskeletal linker protein that connects to intermediate filaments and controls their reorganization in response to stress (PubMed:16382146, PubMed:18285451, PubMed:20926261, PubMed:23599337, PubMed:25232867, PubMed:25617501). In response to mechanical stress like wound healing, is associated with the machinery for cellular motility by slowing down keratinocyte migration and proliferation and accelerating keratin bundling in proliferating keratinocytes thus contributing to tissue architecture (PubMed:16382146, PubMed:20926261). However in wound healing in corneal epithelium also positively regulates cell differentiation and proliferation and negatively regulates migration thereby controlling corneal epithelium morphogenesis and integrity (PubMed:23599337). In response to cellular stress, plays a role in keratin filament reorganization, probably by protecting keratin filaments against disruption (PubMed:18285451). During liver and pancreas injuries, plays a protective role by chaperoning disease-induced intermediate filament reorganization (PubMed:25232867, PubMed:25617501).</text>
</comment>
<comment type="subunit">
    <text evidence="1 6 10">Interacts with KRT5, KRT14 and KRT5/KRT14 heterotetramer; interacts preferentially with assembled filaments rather than keratin monomers (PubMed:18285451). Interacts with KRT8 and KRT18 and KRT8/KRT18 heterotetramer; interacts preferentially with assembled filaments rather than keratin monomers (PubMed:25617501). Interacts with KRT1, VIM and DES; interaction is stronger with KRT1 than with VIM or DES; interaction is dependent of higher-order structure of intermediate filament (By similarity).</text>
</comment>
<comment type="subcellular location">
    <subcellularLocation>
        <location evidence="7 10">Cytoplasm</location>
        <location evidence="7 10">Cytoskeleton</location>
    </subcellularLocation>
    <subcellularLocation>
        <location evidence="9">Apicolateral cell membrane</location>
    </subcellularLocation>
    <subcellularLocation>
        <location evidence="8">Basolateral cell membrane</location>
    </subcellularLocation>
    <subcellularLocation>
        <location evidence="8">Cell junction</location>
    </subcellularLocation>
    <subcellularLocation>
        <location evidence="1">Cell junction</location>
        <location evidence="1">Hemidesmosome</location>
    </subcellularLocation>
    <subcellularLocation>
        <location evidence="1">Cell junction</location>
        <location evidence="1">Tight junction</location>
    </subcellularLocation>
    <subcellularLocation>
        <location evidence="1">Cell projection</location>
    </subcellularLocation>
    <text evidence="1 9">Apicolateral cell membrane localization is keratin filaments-dependent (PubMed:25232867). May move dynamically from bundling intermediate filaments in the cytoplasm or at the cell periphery and reinforcing them. Decorates the keratin intermediate filaments (IF) network and partially that of vimentin (By similarity).</text>
</comment>
<comment type="tissue specificity">
    <text evidence="4 5 6 9 10">High levels in skin, small intestine and salivary gland. Lower levels in lung, uterus and liver. Not detected in brain, kidney, muscle, heart or spleen. In skin, expressed in all epidermal layers but not in the dermis. In intestine, expressed exclusively in the epithelial cell layer of the villi. In liver, expressed at hepatocyte margins. Around the region of the wound, expressed in the upper half of the epidermis. Weakly expressed on the basilar side of the suprabasal layer of the epidermis at the wound's edge. Expressed strongly in the upper layer of the epidermis, especially in larger keratinocytes (PubMed:16382146). Expressed in undifferentiated primary keratinocytes (PubMed:18285451). Strongly expressed in ductal cells, and also expressed in acinar cells (PubMed:25232867). Expressed in hepatocytes and cholangiocytes (PubMed:25617501).</text>
</comment>
<comment type="induction">
    <text evidence="6 10">Up-regulated upon calcium-mediated keratinocyte differentiation (PubMed:18285451). Up-regulated in hepatocytes during liver stress (PubMed:25617501).</text>
</comment>
<comment type="domain">
    <text evidence="1">Plectin repeats are important for the binding to keratin and VIM and controls intermediate filament networks organization.</text>
</comment>
<comment type="disruption phenotype">
    <text evidence="5">Homozygous knockout mice develop normally and are healthy and fertile. Skin of homozygous knockout mice reveal no blistering and fragility. Exhibit slightly enhanced wound closure.</text>
</comment>
<comment type="similarity">
    <text evidence="12">Belongs to the plakin or cytolinker family.</text>
</comment>
<accession>Q8R0W0</accession>
<gene>
    <name evidence="15" type="primary">Eppk1</name>
    <name type="synonym">EPPK</name>
</gene>
<keyword id="KW-0965">Cell junction</keyword>
<keyword id="KW-1003">Cell membrane</keyword>
<keyword id="KW-0966">Cell projection</keyword>
<keyword id="KW-0175">Coiled coil</keyword>
<keyword id="KW-0963">Cytoplasm</keyword>
<keyword id="KW-0206">Cytoskeleton</keyword>
<keyword id="KW-0472">Membrane</keyword>
<keyword id="KW-0597">Phosphoprotein</keyword>
<keyword id="KW-1185">Reference proteome</keyword>
<keyword id="KW-0677">Repeat</keyword>
<keyword id="KW-0796">Tight junction</keyword>
<feature type="chain" id="PRO_0000078146" description="Epiplakin">
    <location>
        <begin position="1"/>
        <end position="6548"/>
    </location>
</feature>
<feature type="repeat" description="Plectin 1">
    <location>
        <begin position="41"/>
        <end position="78"/>
    </location>
</feature>
<feature type="repeat" description="Plectin 2">
    <location>
        <begin position="79"/>
        <end position="116"/>
    </location>
</feature>
<feature type="repeat" description="Plectin 3">
    <location>
        <begin position="117"/>
        <end position="154"/>
    </location>
</feature>
<feature type="repeat" description="Plectin 4">
    <location>
        <begin position="155"/>
        <end position="192"/>
    </location>
</feature>
<feature type="repeat" description="Plectin 5">
    <location>
        <begin position="285"/>
        <end position="322"/>
    </location>
</feature>
<feature type="repeat" description="Plectin 6">
    <location>
        <begin position="323"/>
        <end position="360"/>
    </location>
</feature>
<feature type="repeat" description="Plectin 7">
    <location>
        <begin position="362"/>
        <end position="398"/>
    </location>
</feature>
<feature type="repeat" description="Plectin 8">
    <location>
        <begin position="399"/>
        <end position="436"/>
    </location>
</feature>
<feature type="repeat" description="Plectin 9">
    <location>
        <begin position="437"/>
        <end position="470"/>
    </location>
</feature>
<feature type="repeat" description="Plectin 10">
    <location>
        <begin position="611"/>
        <end position="648"/>
    </location>
</feature>
<feature type="repeat" description="Plectin 11">
    <location>
        <begin position="649"/>
        <end position="686"/>
    </location>
</feature>
<feature type="repeat" description="Plectin 12">
    <location>
        <begin position="687"/>
        <end position="724"/>
    </location>
</feature>
<feature type="repeat" description="Plectin 13">
    <location>
        <begin position="725"/>
        <end position="762"/>
    </location>
</feature>
<feature type="repeat" description="Plectin 14">
    <location>
        <begin position="766"/>
        <end position="800"/>
    </location>
</feature>
<feature type="repeat" description="Plectin 15">
    <location>
        <begin position="931"/>
        <end position="968"/>
    </location>
</feature>
<feature type="repeat" description="Plectin 16">
    <location>
        <begin position="969"/>
        <end position="1006"/>
    </location>
</feature>
<feature type="repeat" description="Plectin 17">
    <location>
        <begin position="1007"/>
        <end position="1044"/>
    </location>
</feature>
<feature type="repeat" description="Plectin 18">
    <location>
        <begin position="1224"/>
        <end position="1284"/>
    </location>
</feature>
<feature type="repeat" description="Plectin 19">
    <location>
        <begin position="1285"/>
        <end position="1322"/>
    </location>
</feature>
<feature type="repeat" description="Plectin 20">
    <location>
        <begin position="1323"/>
        <end position="1360"/>
    </location>
</feature>
<feature type="repeat" description="Plectin 21">
    <location>
        <begin position="1361"/>
        <end position="1398"/>
    </location>
</feature>
<feature type="repeat" description="Plectin 22">
    <location>
        <begin position="1402"/>
        <end position="1436"/>
    </location>
</feature>
<feature type="repeat" description="Plectin 23">
    <location>
        <begin position="1572"/>
        <end position="1609"/>
    </location>
</feature>
<feature type="repeat" description="Plectin 24">
    <location>
        <begin position="1610"/>
        <end position="1647"/>
    </location>
</feature>
<feature type="repeat" description="Plectin 25">
    <location>
        <begin position="1648"/>
        <end position="1685"/>
    </location>
</feature>
<feature type="repeat" description="Plectin 26">
    <location>
        <begin position="1686"/>
        <end position="1723"/>
    </location>
</feature>
<feature type="repeat" description="Plectin 27">
    <location>
        <begin position="1727"/>
        <end position="1761"/>
    </location>
</feature>
<feature type="repeat" description="Plectin 28">
    <location>
        <begin position="1898"/>
        <end position="1935"/>
    </location>
</feature>
<feature type="repeat" description="Plectin 29">
    <location>
        <begin position="1936"/>
        <end position="1973"/>
    </location>
</feature>
<feature type="repeat" description="Plectin 30">
    <location>
        <begin position="1974"/>
        <end position="2011"/>
    </location>
</feature>
<feature type="repeat" description="Plectin 31">
    <location>
        <begin position="2012"/>
        <end position="2049"/>
    </location>
</feature>
<feature type="repeat" description="Plectin 32">
    <location>
        <begin position="2225"/>
        <end position="2267"/>
    </location>
</feature>
<feature type="repeat" description="Plectin 33">
    <location>
        <begin position="2268"/>
        <end position="2305"/>
    </location>
</feature>
<feature type="repeat" description="Plectin 34">
    <location>
        <begin position="2306"/>
        <end position="2343"/>
    </location>
</feature>
<feature type="repeat" description="Plectin 35">
    <location>
        <begin position="2344"/>
        <end position="2381"/>
    </location>
</feature>
<feature type="repeat" description="Plectin 36">
    <location>
        <begin position="2385"/>
        <end position="2419"/>
    </location>
</feature>
<feature type="repeat" description="Plectin 37">
    <location>
        <begin position="2740"/>
        <end position="2782"/>
    </location>
</feature>
<feature type="repeat" description="Plectin 38">
    <location>
        <begin position="2783"/>
        <end position="2820"/>
    </location>
</feature>
<feature type="repeat" description="Plectin 39">
    <location>
        <begin position="2821"/>
        <end position="2858"/>
    </location>
</feature>
<feature type="repeat" description="Plectin 40">
    <location>
        <begin position="2859"/>
        <end position="2896"/>
    </location>
</feature>
<feature type="repeat" description="Plectin 41">
    <location>
        <begin position="2900"/>
        <end position="2934"/>
    </location>
</feature>
<feature type="repeat" description="Plectin 42">
    <location>
        <begin position="3255"/>
        <end position="3297"/>
    </location>
</feature>
<feature type="repeat" description="Plectin 43">
    <location>
        <begin position="3298"/>
        <end position="3335"/>
    </location>
</feature>
<feature type="repeat" description="Plectin 44">
    <location>
        <begin position="3336"/>
        <end position="3373"/>
    </location>
</feature>
<feature type="repeat" description="Plectin 45">
    <location>
        <begin position="3374"/>
        <end position="3411"/>
    </location>
</feature>
<feature type="repeat" description="Plectin 46">
    <location>
        <begin position="3415"/>
        <end position="3449"/>
    </location>
</feature>
<feature type="repeat" description="Plectin 47">
    <location>
        <begin position="3770"/>
        <end position="3812"/>
    </location>
</feature>
<feature type="repeat" description="Plectin 48">
    <location>
        <begin position="3813"/>
        <end position="3850"/>
    </location>
</feature>
<feature type="repeat" description="Plectin 49">
    <location>
        <begin position="3851"/>
        <end position="3888"/>
    </location>
</feature>
<feature type="repeat" description="Plectin 50">
    <location>
        <begin position="3889"/>
        <end position="3926"/>
    </location>
</feature>
<feature type="repeat" description="Plectin 51">
    <location>
        <begin position="3930"/>
        <end position="3964"/>
    </location>
</feature>
<feature type="repeat" description="Plectin 52">
    <location>
        <begin position="4285"/>
        <end position="4327"/>
    </location>
</feature>
<feature type="repeat" description="Plectin 53">
    <location>
        <begin position="4328"/>
        <end position="4365"/>
    </location>
</feature>
<feature type="repeat" description="Plectin 54">
    <location>
        <begin position="4366"/>
        <end position="4403"/>
    </location>
</feature>
<feature type="repeat" description="Plectin 55">
    <location>
        <begin position="4404"/>
        <end position="4441"/>
    </location>
</feature>
<feature type="repeat" description="Plectin 56">
    <location>
        <begin position="4445"/>
        <end position="4479"/>
    </location>
</feature>
<feature type="repeat" description="Plectin 57">
    <location>
        <begin position="4800"/>
        <end position="4842"/>
    </location>
</feature>
<feature type="repeat" description="Plectin 58">
    <location>
        <begin position="4843"/>
        <end position="4880"/>
    </location>
</feature>
<feature type="repeat" description="Plectin 59">
    <location>
        <begin position="4881"/>
        <end position="4918"/>
    </location>
</feature>
<feature type="repeat" description="Plectin 60">
    <location>
        <begin position="4919"/>
        <end position="4956"/>
    </location>
</feature>
<feature type="repeat" description="Plectin 61">
    <location>
        <begin position="4960"/>
        <end position="4994"/>
    </location>
</feature>
<feature type="repeat" description="Plectin 62">
    <location>
        <begin position="5315"/>
        <end position="5357"/>
    </location>
</feature>
<feature type="repeat" description="Plectin 63">
    <location>
        <begin position="5358"/>
        <end position="5395"/>
    </location>
</feature>
<feature type="repeat" description="Plectin 64">
    <location>
        <begin position="5396"/>
        <end position="5433"/>
    </location>
</feature>
<feature type="repeat" description="Plectin 65">
    <location>
        <begin position="5434"/>
        <end position="5471"/>
    </location>
</feature>
<feature type="repeat" description="Plectin 66">
    <location>
        <begin position="5475"/>
        <end position="5509"/>
    </location>
</feature>
<feature type="repeat" description="Plectin 67">
    <location>
        <begin position="5830"/>
        <end position="5872"/>
    </location>
</feature>
<feature type="repeat" description="Plectin 68">
    <location>
        <begin position="5873"/>
        <end position="5910"/>
    </location>
</feature>
<feature type="repeat" description="Plectin 69">
    <location>
        <begin position="5911"/>
        <end position="5948"/>
    </location>
</feature>
<feature type="repeat" description="Plectin 70">
    <location>
        <begin position="5949"/>
        <end position="5986"/>
    </location>
</feature>
<feature type="repeat" description="Plectin 71">
    <location>
        <begin position="5990"/>
        <end position="6024"/>
    </location>
</feature>
<feature type="repeat" description="Plectin 72">
    <location>
        <begin position="6345"/>
        <end position="6387"/>
    </location>
</feature>
<feature type="repeat" description="Plectin 73">
    <location>
        <begin position="6388"/>
        <end position="6425"/>
    </location>
</feature>
<feature type="repeat" description="Plectin 74">
    <location>
        <begin position="6426"/>
        <end position="6463"/>
    </location>
</feature>
<feature type="repeat" description="Plectin 75">
    <location>
        <begin position="6464"/>
        <end position="6501"/>
    </location>
</feature>
<feature type="repeat" description="Plectin 76">
    <location>
        <begin position="6505"/>
        <end position="6539"/>
    </location>
</feature>
<feature type="region of interest" description="Interaction with KRT5" evidence="6">
    <location>
        <begin position="49"/>
        <end position="1123"/>
    </location>
</feature>
<feature type="region of interest" description="Interaction with KRT5" evidence="6">
    <location>
        <begin position="1580"/>
        <end position="6545"/>
    </location>
</feature>
<feature type="region of interest" description="Disordered" evidence="3">
    <location>
        <begin position="2578"/>
        <end position="2626"/>
    </location>
</feature>
<feature type="region of interest" description="Interaction with KRT14" evidence="6">
    <location>
        <begin position="2748"/>
        <end position="2940"/>
    </location>
</feature>
<feature type="region of interest" description="Disordered" evidence="3">
    <location>
        <begin position="3093"/>
        <end position="3144"/>
    </location>
</feature>
<feature type="region of interest" description="Disordered" evidence="3">
    <location>
        <begin position="3608"/>
        <end position="3659"/>
    </location>
</feature>
<feature type="region of interest" description="Disordered" evidence="3">
    <location>
        <begin position="4123"/>
        <end position="4174"/>
    </location>
</feature>
<feature type="region of interest" description="Disordered" evidence="3">
    <location>
        <begin position="4638"/>
        <end position="4689"/>
    </location>
</feature>
<feature type="region of interest" description="Disordered" evidence="3">
    <location>
        <begin position="5153"/>
        <end position="5204"/>
    </location>
</feature>
<feature type="region of interest" description="Disordered" evidence="3">
    <location>
        <begin position="5668"/>
        <end position="5719"/>
    </location>
</feature>
<feature type="region of interest" description="Disordered" evidence="3">
    <location>
        <begin position="6183"/>
        <end position="6234"/>
    </location>
</feature>
<feature type="coiled-coil region" evidence="2">
    <location>
        <begin position="545"/>
        <end position="565"/>
    </location>
</feature>
<feature type="coiled-coil region" evidence="2">
    <location>
        <begin position="851"/>
        <end position="886"/>
    </location>
</feature>
<feature type="coiled-coil region" evidence="2">
    <location>
        <begin position="1819"/>
        <end position="1851"/>
    </location>
</feature>
<feature type="compositionally biased region" description="Basic and acidic residues" evidence="3">
    <location>
        <begin position="2582"/>
        <end position="2592"/>
    </location>
</feature>
<feature type="compositionally biased region" description="Polar residues" evidence="3">
    <location>
        <begin position="2593"/>
        <end position="2606"/>
    </location>
</feature>
<feature type="compositionally biased region" description="Polar residues" evidence="3">
    <location>
        <begin position="2615"/>
        <end position="2626"/>
    </location>
</feature>
<feature type="compositionally biased region" description="Basic and acidic residues" evidence="3">
    <location>
        <begin position="3097"/>
        <end position="3107"/>
    </location>
</feature>
<feature type="compositionally biased region" description="Polar residues" evidence="3">
    <location>
        <begin position="3108"/>
        <end position="3121"/>
    </location>
</feature>
<feature type="compositionally biased region" description="Polar residues" evidence="3">
    <location>
        <begin position="3130"/>
        <end position="3144"/>
    </location>
</feature>
<feature type="compositionally biased region" description="Basic and acidic residues" evidence="3">
    <location>
        <begin position="3612"/>
        <end position="3622"/>
    </location>
</feature>
<feature type="compositionally biased region" description="Polar residues" evidence="3">
    <location>
        <begin position="3623"/>
        <end position="3636"/>
    </location>
</feature>
<feature type="compositionally biased region" description="Polar residues" evidence="3">
    <location>
        <begin position="3645"/>
        <end position="3659"/>
    </location>
</feature>
<feature type="compositionally biased region" description="Basic and acidic residues" evidence="3">
    <location>
        <begin position="4127"/>
        <end position="4137"/>
    </location>
</feature>
<feature type="compositionally biased region" description="Polar residues" evidence="3">
    <location>
        <begin position="4138"/>
        <end position="4151"/>
    </location>
</feature>
<feature type="compositionally biased region" description="Polar residues" evidence="3">
    <location>
        <begin position="4160"/>
        <end position="4174"/>
    </location>
</feature>
<feature type="compositionally biased region" description="Basic and acidic residues" evidence="3">
    <location>
        <begin position="4642"/>
        <end position="4652"/>
    </location>
</feature>
<feature type="compositionally biased region" description="Polar residues" evidence="3">
    <location>
        <begin position="4653"/>
        <end position="4666"/>
    </location>
</feature>
<feature type="compositionally biased region" description="Polar residues" evidence="3">
    <location>
        <begin position="4675"/>
        <end position="4689"/>
    </location>
</feature>
<feature type="compositionally biased region" description="Basic and acidic residues" evidence="3">
    <location>
        <begin position="5157"/>
        <end position="5167"/>
    </location>
</feature>
<feature type="compositionally biased region" description="Polar residues" evidence="3">
    <location>
        <begin position="5168"/>
        <end position="5181"/>
    </location>
</feature>
<feature type="compositionally biased region" description="Polar residues" evidence="3">
    <location>
        <begin position="5190"/>
        <end position="5204"/>
    </location>
</feature>
<feature type="compositionally biased region" description="Basic and acidic residues" evidence="3">
    <location>
        <begin position="5672"/>
        <end position="5682"/>
    </location>
</feature>
<feature type="compositionally biased region" description="Polar residues" evidence="3">
    <location>
        <begin position="5683"/>
        <end position="5696"/>
    </location>
</feature>
<feature type="compositionally biased region" description="Polar residues" evidence="3">
    <location>
        <begin position="5705"/>
        <end position="5719"/>
    </location>
</feature>
<feature type="compositionally biased region" description="Basic and acidic residues" evidence="3">
    <location>
        <begin position="6187"/>
        <end position="6197"/>
    </location>
</feature>
<feature type="compositionally biased region" description="Polar residues" evidence="3">
    <location>
        <begin position="6198"/>
        <end position="6211"/>
    </location>
</feature>
<feature type="compositionally biased region" description="Polar residues" evidence="3">
    <location>
        <begin position="6220"/>
        <end position="6234"/>
    </location>
</feature>
<feature type="modified residue" description="Phosphothreonine" evidence="1">
    <location>
        <position position="33"/>
    </location>
</feature>
<feature type="modified residue" description="Phosphothreonine" evidence="1">
    <location>
        <position position="1551"/>
    </location>
</feature>
<feature type="modified residue" description="Phosphoserine" evidence="1">
    <location>
        <position position="2430"/>
    </location>
</feature>
<feature type="modified residue" description="Phosphoserine" evidence="1">
    <location>
        <position position="2508"/>
    </location>
</feature>
<feature type="modified residue" description="Phosphoserine" evidence="1">
    <location>
        <position position="3220"/>
    </location>
</feature>
<feature type="modified residue" description="Phosphoserine" evidence="1">
    <location>
        <position position="3460"/>
    </location>
</feature>
<feature type="modified residue" description="Phosphoserine" evidence="1">
    <location>
        <position position="3538"/>
    </location>
</feature>
<feature type="modified residue" description="Phosphoserine" evidence="1">
    <location>
        <position position="3735"/>
    </location>
</feature>
<feature type="modified residue" description="Phosphoserine" evidence="1">
    <location>
        <position position="3975"/>
    </location>
</feature>
<feature type="modified residue" description="Phosphoserine" evidence="1">
    <location>
        <position position="4053"/>
    </location>
</feature>
<feature type="modified residue" description="Phosphoserine" evidence="1">
    <location>
        <position position="4765"/>
    </location>
</feature>
<feature type="modified residue" description="Phosphoserine" evidence="1">
    <location>
        <position position="5005"/>
    </location>
</feature>
<feature type="modified residue" description="Phosphoserine" evidence="1">
    <location>
        <position position="5083"/>
    </location>
</feature>
<feature type="modified residue" description="Phosphoserine" evidence="1">
    <location>
        <position position="5795"/>
    </location>
</feature>
<feature type="modified residue" description="Phosphoserine" evidence="1">
    <location>
        <position position="6035"/>
    </location>
</feature>
<feature type="modified residue" description="Phosphoserine" evidence="1">
    <location>
        <position position="6113"/>
    </location>
</feature>
<feature type="modified residue" description="Phosphoserine" evidence="1">
    <location>
        <position position="6310"/>
    </location>
</feature>
<name>EPIPL_MOUSE</name>
<evidence type="ECO:0000250" key="1">
    <source>
        <dbReference type="UniProtKB" id="P58107"/>
    </source>
</evidence>
<evidence type="ECO:0000255" key="2"/>
<evidence type="ECO:0000256" key="3">
    <source>
        <dbReference type="SAM" id="MobiDB-lite"/>
    </source>
</evidence>
<evidence type="ECO:0000269" key="4">
    <source>
    </source>
</evidence>
<evidence type="ECO:0000269" key="5">
    <source>
    </source>
</evidence>
<evidence type="ECO:0000269" key="6">
    <source>
    </source>
</evidence>
<evidence type="ECO:0000269" key="7">
    <source>
    </source>
</evidence>
<evidence type="ECO:0000269" key="8">
    <source>
    </source>
</evidence>
<evidence type="ECO:0000269" key="9">
    <source>
    </source>
</evidence>
<evidence type="ECO:0000269" key="10">
    <source>
    </source>
</evidence>
<evidence type="ECO:0000303" key="11">
    <source>
    </source>
</evidence>
<evidence type="ECO:0000305" key="12"/>
<evidence type="ECO:0000312" key="13">
    <source>
        <dbReference type="EMBL" id="AAH26387.1"/>
    </source>
</evidence>
<evidence type="ECO:0000312" key="14">
    <source>
        <dbReference type="EMBL" id="AAP70316.1"/>
    </source>
</evidence>
<evidence type="ECO:0000312" key="15">
    <source>
        <dbReference type="MGI" id="MGI:2386306"/>
    </source>
</evidence>
<dbReference type="EMBL" id="AY312170">
    <property type="protein sequence ID" value="AAP70316.1"/>
    <property type="molecule type" value="mRNA"/>
</dbReference>
<dbReference type="EMBL" id="BC026387">
    <property type="protein sequence ID" value="AAH26387.1"/>
    <property type="molecule type" value="mRNA"/>
</dbReference>
<dbReference type="RefSeq" id="NP_659097.2">
    <property type="nucleotide sequence ID" value="NM_144848.2"/>
</dbReference>
<dbReference type="BioGRID" id="230168">
    <property type="interactions" value="5"/>
</dbReference>
<dbReference type="FunCoup" id="Q8R0W0">
    <property type="interactions" value="116"/>
</dbReference>
<dbReference type="IntAct" id="Q8R0W0">
    <property type="interactions" value="1"/>
</dbReference>
<dbReference type="STRING" id="10090.ENSMUSP00000154609"/>
<dbReference type="GlyGen" id="Q8R0W0">
    <property type="glycosylation" value="14 sites, 1 O-linked glycan (3 sites)"/>
</dbReference>
<dbReference type="iPTMnet" id="Q8R0W0"/>
<dbReference type="PhosphoSitePlus" id="Q8R0W0"/>
<dbReference type="SwissPalm" id="Q8R0W0"/>
<dbReference type="jPOST" id="Q8R0W0"/>
<dbReference type="PeptideAtlas" id="Q8R0W0"/>
<dbReference type="ProteomicsDB" id="277890"/>
<dbReference type="Pumba" id="Q8R0W0"/>
<dbReference type="DNASU" id="223650"/>
<dbReference type="GeneID" id="223650"/>
<dbReference type="KEGG" id="mmu:223650"/>
<dbReference type="UCSC" id="uc007wio.1">
    <property type="organism name" value="mouse"/>
</dbReference>
<dbReference type="AGR" id="MGI:2386306"/>
<dbReference type="CTD" id="83481"/>
<dbReference type="MGI" id="MGI:2386306">
    <property type="gene designation" value="Eppk1"/>
</dbReference>
<dbReference type="InParanoid" id="Q8R0W0"/>
<dbReference type="OrthoDB" id="61791at9989"/>
<dbReference type="BioGRID-ORCS" id="223650">
    <property type="hits" value="2 hits in 17 CRISPR screens"/>
</dbReference>
<dbReference type="PRO" id="PR:Q8R0W0"/>
<dbReference type="Proteomes" id="UP000000589">
    <property type="component" value="Unplaced"/>
</dbReference>
<dbReference type="RNAct" id="Q8R0W0">
    <property type="molecule type" value="protein"/>
</dbReference>
<dbReference type="GO" id="GO:0016327">
    <property type="term" value="C:apicolateral plasma membrane"/>
    <property type="evidence" value="ECO:0000314"/>
    <property type="project" value="UniProtKB"/>
</dbReference>
<dbReference type="GO" id="GO:0045178">
    <property type="term" value="C:basal part of cell"/>
    <property type="evidence" value="ECO:0000314"/>
    <property type="project" value="UniProtKB"/>
</dbReference>
<dbReference type="GO" id="GO:0016323">
    <property type="term" value="C:basolateral plasma membrane"/>
    <property type="evidence" value="ECO:0007669"/>
    <property type="project" value="UniProtKB-SubCell"/>
</dbReference>
<dbReference type="GO" id="GO:0005923">
    <property type="term" value="C:bicellular tight junction"/>
    <property type="evidence" value="ECO:0007669"/>
    <property type="project" value="UniProtKB-SubCell"/>
</dbReference>
<dbReference type="GO" id="GO:0042995">
    <property type="term" value="C:cell projection"/>
    <property type="evidence" value="ECO:0007669"/>
    <property type="project" value="UniProtKB-SubCell"/>
</dbReference>
<dbReference type="GO" id="GO:0005911">
    <property type="term" value="C:cell-cell junction"/>
    <property type="evidence" value="ECO:0000314"/>
    <property type="project" value="UniProtKB"/>
</dbReference>
<dbReference type="GO" id="GO:0005737">
    <property type="term" value="C:cytoplasm"/>
    <property type="evidence" value="ECO:0000314"/>
    <property type="project" value="UniProtKB"/>
</dbReference>
<dbReference type="GO" id="GO:0005856">
    <property type="term" value="C:cytoskeleton"/>
    <property type="evidence" value="ECO:0000314"/>
    <property type="project" value="UniProtKB"/>
</dbReference>
<dbReference type="GO" id="GO:0030056">
    <property type="term" value="C:hemidesmosome"/>
    <property type="evidence" value="ECO:0007669"/>
    <property type="project" value="UniProtKB-SubCell"/>
</dbReference>
<dbReference type="GO" id="GO:1990254">
    <property type="term" value="F:keratin filament binding"/>
    <property type="evidence" value="ECO:0000353"/>
    <property type="project" value="UniProtKB"/>
</dbReference>
<dbReference type="GO" id="GO:0007010">
    <property type="term" value="P:cytoskeleton organization"/>
    <property type="evidence" value="ECO:0000315"/>
    <property type="project" value="UniProtKB"/>
</dbReference>
<dbReference type="GO" id="GO:0045110">
    <property type="term" value="P:intermediate filament bundle assembly"/>
    <property type="evidence" value="ECO:0000315"/>
    <property type="project" value="UniProtKB"/>
</dbReference>
<dbReference type="GO" id="GO:0045109">
    <property type="term" value="P:intermediate filament organization"/>
    <property type="evidence" value="ECO:0000314"/>
    <property type="project" value="UniProtKB"/>
</dbReference>
<dbReference type="GO" id="GO:0051548">
    <property type="term" value="P:negative regulation of keratinocyte migration"/>
    <property type="evidence" value="ECO:0000315"/>
    <property type="project" value="UniProtKB"/>
</dbReference>
<dbReference type="GO" id="GO:0010839">
    <property type="term" value="P:negative regulation of keratinocyte proliferation"/>
    <property type="evidence" value="ECO:0000315"/>
    <property type="project" value="UniProtKB"/>
</dbReference>
<dbReference type="GO" id="GO:0061045">
    <property type="term" value="P:negative regulation of wound healing"/>
    <property type="evidence" value="ECO:0000315"/>
    <property type="project" value="UniProtKB"/>
</dbReference>
<dbReference type="GO" id="GO:0060054">
    <property type="term" value="P:positive regulation of epithelial cell proliferation involved in wound healing"/>
    <property type="evidence" value="ECO:0000315"/>
    <property type="project" value="UniProtKB"/>
</dbReference>
<dbReference type="GO" id="GO:0030856">
    <property type="term" value="P:regulation of epithelial cell differentiation"/>
    <property type="evidence" value="ECO:0000315"/>
    <property type="project" value="UniProtKB"/>
</dbReference>
<dbReference type="GO" id="GO:1905041">
    <property type="term" value="P:regulation of epithelium regeneration"/>
    <property type="evidence" value="ECO:0000315"/>
    <property type="project" value="UniProtKB"/>
</dbReference>
<dbReference type="FunFam" id="3.90.1290.10:FF:000025">
    <property type="entry name" value="Epiplakin 1"/>
    <property type="match status" value="2"/>
</dbReference>
<dbReference type="FunFam" id="3.90.1290.10:FF:000030">
    <property type="entry name" value="Epiplakin 1"/>
    <property type="match status" value="1"/>
</dbReference>
<dbReference type="FunFam" id="3.90.1290.10:FF:000001">
    <property type="entry name" value="Plectin a"/>
    <property type="match status" value="13"/>
</dbReference>
<dbReference type="Gene3D" id="3.90.1290.10">
    <property type="entry name" value="Plakin repeat"/>
    <property type="match status" value="16"/>
</dbReference>
<dbReference type="InterPro" id="IPR043197">
    <property type="entry name" value="Plakin"/>
</dbReference>
<dbReference type="InterPro" id="IPR035915">
    <property type="entry name" value="Plakin_repeat_sf"/>
</dbReference>
<dbReference type="InterPro" id="IPR001101">
    <property type="entry name" value="Plectin_repeat"/>
</dbReference>
<dbReference type="PANTHER" id="PTHR23169">
    <property type="entry name" value="ENVOPLAKIN"/>
    <property type="match status" value="1"/>
</dbReference>
<dbReference type="PANTHER" id="PTHR23169:SF21">
    <property type="entry name" value="EPIPLAKIN"/>
    <property type="match status" value="1"/>
</dbReference>
<dbReference type="Pfam" id="PF00681">
    <property type="entry name" value="Plectin"/>
    <property type="match status" value="36"/>
</dbReference>
<dbReference type="SMART" id="SM00250">
    <property type="entry name" value="PLEC"/>
    <property type="match status" value="77"/>
</dbReference>
<dbReference type="SUPFAM" id="SSF75399">
    <property type="entry name" value="Plakin repeat"/>
    <property type="match status" value="16"/>
</dbReference>